<dbReference type="EC" id="3.4.19.12" evidence="1"/>
<dbReference type="EC" id="3.4.22.-" evidence="1"/>
<dbReference type="EMBL" id="X17403">
    <property type="protein sequence ID" value="CAA35407.1"/>
    <property type="molecule type" value="Genomic_DNA"/>
</dbReference>
<dbReference type="EMBL" id="BK000394">
    <property type="protein sequence ID" value="DAA00151.1"/>
    <property type="molecule type" value="Genomic_DNA"/>
</dbReference>
<dbReference type="PIR" id="S09811">
    <property type="entry name" value="S09811"/>
</dbReference>
<dbReference type="PDB" id="7ET3">
    <property type="method" value="EM"/>
    <property type="resolution" value="4.20 A"/>
    <property type="chains" value="H/P=1-2241"/>
</dbReference>
<dbReference type="PDB" id="8TEP">
    <property type="method" value="EM"/>
    <property type="resolution" value="3.50 A"/>
    <property type="chains" value="A/C=1-2241"/>
</dbReference>
<dbReference type="PDB" id="8TES">
    <property type="method" value="EM"/>
    <property type="resolution" value="3.27 A"/>
    <property type="chains" value="A/C=1-2241"/>
</dbReference>
<dbReference type="PDB" id="8TET">
    <property type="method" value="EM"/>
    <property type="resolution" value="4.26 A"/>
    <property type="chains" value="A/C=1-2241"/>
</dbReference>
<dbReference type="PDB" id="8TEU">
    <property type="method" value="EM"/>
    <property type="resolution" value="4.01 A"/>
    <property type="chains" value="A/C=1-2241"/>
</dbReference>
<dbReference type="PDB" id="8TEW">
    <property type="method" value="EM"/>
    <property type="resolution" value="3.02 A"/>
    <property type="chains" value="A/C=1-2241"/>
</dbReference>
<dbReference type="PDBsum" id="7ET3"/>
<dbReference type="PDBsum" id="8TEP"/>
<dbReference type="PDBsum" id="8TES"/>
<dbReference type="PDBsum" id="8TET"/>
<dbReference type="PDBsum" id="8TEU"/>
<dbReference type="PDBsum" id="8TEW"/>
<dbReference type="EMDB" id="EMD-41194"/>
<dbReference type="EMDB" id="EMD-41200"/>
<dbReference type="EMDB" id="EMD-41201"/>
<dbReference type="EMDB" id="EMD-41202"/>
<dbReference type="EMDB" id="EMD-41204"/>
<dbReference type="SMR" id="P16785"/>
<dbReference type="Proteomes" id="UP000008991">
    <property type="component" value="Segment"/>
</dbReference>
<dbReference type="Proteomes" id="UP000008992">
    <property type="component" value="Segment"/>
</dbReference>
<dbReference type="GO" id="GO:0030430">
    <property type="term" value="C:host cell cytoplasm"/>
    <property type="evidence" value="ECO:0007669"/>
    <property type="project" value="UniProtKB-SubCell"/>
</dbReference>
<dbReference type="GO" id="GO:0042025">
    <property type="term" value="C:host cell nucleus"/>
    <property type="evidence" value="ECO:0007669"/>
    <property type="project" value="UniProtKB-SubCell"/>
</dbReference>
<dbReference type="GO" id="GO:0019033">
    <property type="term" value="C:viral tegument"/>
    <property type="evidence" value="ECO:0007669"/>
    <property type="project" value="UniProtKB-SubCell"/>
</dbReference>
<dbReference type="GO" id="GO:0004843">
    <property type="term" value="F:cysteine-type deubiquitinase activity"/>
    <property type="evidence" value="ECO:0007669"/>
    <property type="project" value="UniProtKB-EC"/>
</dbReference>
<dbReference type="GO" id="GO:0006508">
    <property type="term" value="P:proteolysis"/>
    <property type="evidence" value="ECO:0007669"/>
    <property type="project" value="UniProtKB-KW"/>
</dbReference>
<dbReference type="GO" id="GO:0039648">
    <property type="term" value="P:symbiont-mediated perturbation of host ubiquitin-like protein modification"/>
    <property type="evidence" value="ECO:0007669"/>
    <property type="project" value="UniProtKB-KW"/>
</dbReference>
<dbReference type="Gene3D" id="3.90.70.120">
    <property type="match status" value="1"/>
</dbReference>
<dbReference type="HAMAP" id="MF_04044">
    <property type="entry name" value="HSV_LTP"/>
    <property type="match status" value="1"/>
</dbReference>
<dbReference type="InterPro" id="IPR006928">
    <property type="entry name" value="Herpes_teg_USP"/>
</dbReference>
<dbReference type="InterPro" id="IPR034702">
    <property type="entry name" value="HSV_LTP"/>
</dbReference>
<dbReference type="InterPro" id="IPR038765">
    <property type="entry name" value="Papain-like_cys_pep_sf"/>
</dbReference>
<dbReference type="Pfam" id="PF04843">
    <property type="entry name" value="Herpes_teg_N"/>
    <property type="match status" value="1"/>
</dbReference>
<dbReference type="SUPFAM" id="SSF54001">
    <property type="entry name" value="Cysteine proteinases"/>
    <property type="match status" value="1"/>
</dbReference>
<dbReference type="PROSITE" id="PS51521">
    <property type="entry name" value="HTUSP"/>
    <property type="match status" value="1"/>
</dbReference>
<protein>
    <recommendedName>
        <fullName evidence="1">Large tegument protein deneddylase</fullName>
        <ecNumber evidence="1">3.4.19.12</ecNumber>
        <ecNumber evidence="1">3.4.22.-</ecNumber>
    </recommendedName>
</protein>
<sequence>MKVTQASCHQGDIARFGARAGNQCVCNGIMFLHALHLGGTSAVLQTEALDAIMEEGARLDARLERELQKKLPAGGRLPVYRLGDEVPRRLESRFGRTVHALSRPFNGTTETCDLDGYMCPGIFDFLRYAHAKPRPTYVLVTVNSLARAVVFTEDHMLVFDPHSSAECHNAAVYHCEGLHQVLMVLTGFGVQLSPAFYYEALFLYMLDVATVPEAEIAARLVSTYRDRDIDLTGVVRESADTAATTTTAAPSLPPLPDPIVDPGCPPGVAPSIPVYDPSSSPKKTPEKRRKDLSGSKHGGKKKPPSTTSKTLATASSSPSAIAAASSSSAVPPSYSCGEGALPALGRYQQLVDEVEQELKALTLPPLPANTSAWTLHAAGTESGANAATATAPSFDEAFLTDRLQQLIIHAVNQRSCLRRPCGPQSAAQQAVRAYLGLSKKLDAFLLNWLHHGLDLQRMHDYLSHKTTKGTYSTLDRALLEKMQVVFDPYGRQHGPALIAWVEEMLRYVESKPTNELSQRLQRFVTKRPMPVSDSFVCLRPVDFQRLTQVIEQRRRVLQRQREEYHGVYEHLAGLITSIDIHDLDASDLNRREILKALQPLDDNAKQELFRLGNAKMLELQMDLDRLSTQLLTRVHNHILNGFLPVEDLKQMERVVEQVLRLFYDLRDLKLCDGSYEEGFVVIREQLSYLMTGTVRDNVPLLQEILQLRHAYQQATQQNEGRLTQIHDLLHVIETLVRDPGSRGSALTLALVQEQLAQLEALGGLQLPEVQQRLQNAQLALSRLYEEEEETQRFLDGLSYDDPPNEQTIKRHPQLREMLRRDEQTRLRLINAVLSMFHTLVMRLARDESPRPTFFDAVSLLLQQLPPDSHEREDLRAANATYAQMVKKLEQIEKAGTGASEKRFQALRELVYFFRNHEYFFQHMVGRLGVGPQVTELYERYQHEMEEQHLERLEREWQEEAGKLTVTSVEDVQRVLARAPSHRVMHQMQQTLTTKMQDFLDKEKRKQEEQQRQLLDGYQKKVQQDLQRVVDAVKGEMLSTIPHQPLEATLELLLGLDQRAQPLLDKFNQDLLSALQQLSKKLDGRINECLHGVLTGDVERRCHPHREAAMQTQASLNHLDQILGPQLLIHETQQALQHAVHQAQFIEKCQQGDPTTAITGSEFEGDFARYRSSQQKMEEQLQETRQQMTETSERLDRSLRQDPGSSSVTRVPEKPFKGQELAGRITPPPADFQQPVFKTLLDQQADAARKALSDEADLLNQKVQTQLRQRDEQLSTAQNLWTDLVTRHKMSGGLDVTTPDAKALMEKPLETLRELLGKATQQLPYLSAERTVRWMLAFLEEALAQITADPTHPHHGSRTHYRNLQQQAVESAVTLAHQIEQNAACENFIAQHQEATANGASTPRVDMVQAVEAVWQRLEPGRVAGGAARHQKVQELLQRLGQTLGDLELQETLATEYFALLHGIQTFSYGLDFRSQLEKIRDLRTRFAELAKRRGTRLSNEGVLPNPRKPQATTSLGAFTRGLNALERHVQLGHQYLLNKLNGSSLVYRLEDIPSVLPATHETDPALIMRDRLRRLCFARHHDTFLEVVDVFGMRQIVTQAGEPIHLVTDYGNVAFKYLALRDDGRPLAWRRRCSGGGLKNVVTTRYKAITVAVAVCQTLRTFWPQISQYDLRPYLTQHQSHTHPAETHTLHNLKLFCYLVSTAWHQRIDTQQELTAADRVGSGEGGDVGEQRPGRGTVLRLSLQEFCVLIAALYPEYIYTVLKYPVQMSLPSLTAHLHQDVIHAVVNNTHKMPPDHLPEQVKAFCITPTQWPAMQLNKLFWENKLVQQLCQVGPQKSTPPLGKLWLYAMATLVFPQDMLQCLWLELKPQYAETYASVSELVQTLFQIFTQQCEMVTEGYTQPQLPTGEPVLQMIRVPRQDTTTTDTNTTTEPGLLDVFIQTETALDYALGSWLFGIPVCLGVHVADLLKGQRILVARHLEYTSRDRDFLRIQRSRDLNLSQLLQDTWTETPLEHCWLQAQIRRLRDYLRFPTRLEFIPLVIYNAQDHTVVRVLRPPSTFEQDHSRLVLDEAFPTFPLYDQDDNSSADNIAASGAAPTPPVPFNRVPVNIQFLRENPPPIARVQQPPRRHRHRAAAAADDDGQIDHVQDDTSRTADSALVSTAFGGSVFQENRLGETPLCRDELVAVAPGAASTSFASPPITVLTQNVLSALEILRLVRLDLRQLAQSVQDTIQHMRFLYLL</sequence>
<proteinExistence type="evidence at protein level"/>
<name>LTP_HCMVA</name>
<comment type="function">
    <text evidence="1">Large tegument protein that plays multiple roles in the viral cycle. During viral entry, remains associated with the capsid while most of the tegument is detached and participates in the capsid transport toward the host nucleus. Plays a role in the routing of the capsid at the nuclear pore complex and subsequent uncoating. Within the host nucleus, acts as a deneddylase and promotes the degradation of nuclear CRLs (cullin-RING ubiquitin ligases) and thereby stabilizes nuclear CRL substrates, while cytoplasmic CRLs remain unaffected. These modifications prevent host cell cycle S-phase progression and create a favorable environment allowing efficient viral genome replication. Participates later in the secondary envelopment of capsids. Indeed, plays a linker role for the association of the outer viral tegument to the capsids together with the inner tegument protein.</text>
</comment>
<comment type="catalytic activity">
    <reaction evidence="1">
        <text>Thiol-dependent hydrolysis of ester, thioester, amide, peptide and isopeptide bonds formed by the C-terminal Gly of ubiquitin (a 76-residue protein attached to proteins as an intracellular targeting signal).</text>
        <dbReference type="EC" id="3.4.19.12"/>
    </reaction>
</comment>
<comment type="subunit">
    <text evidence="1">Interacts with host CUL1 and CUL4A; these interactions inhibit the E3 ligase activity of cullins. Interacts with inner tegument protein. Interacts with capsid vertex specific component CVC2. Interacts with the major capsid protein/MCP.</text>
</comment>
<comment type="subcellular location">
    <subcellularLocation>
        <location evidence="1">Virion tegument</location>
    </subcellularLocation>
    <subcellularLocation>
        <location evidence="1">Host cytoplasm</location>
    </subcellularLocation>
    <subcellularLocation>
        <location evidence="1">Host nucleus</location>
    </subcellularLocation>
    <text evidence="1">Tightly associated with the capsid.</text>
</comment>
<comment type="similarity">
    <text evidence="1">Belongs to the herpesviridae large tegument protein family.</text>
</comment>
<gene>
    <name type="primary">UL48</name>
</gene>
<organism>
    <name type="scientific">Human cytomegalovirus (strain AD169)</name>
    <name type="common">HHV-5</name>
    <name type="synonym">Human herpesvirus 5</name>
    <dbReference type="NCBI Taxonomy" id="10360"/>
    <lineage>
        <taxon>Viruses</taxon>
        <taxon>Duplodnaviria</taxon>
        <taxon>Heunggongvirae</taxon>
        <taxon>Peploviricota</taxon>
        <taxon>Herviviricetes</taxon>
        <taxon>Herpesvirales</taxon>
        <taxon>Orthoherpesviridae</taxon>
        <taxon>Betaherpesvirinae</taxon>
        <taxon>Cytomegalovirus</taxon>
        <taxon>Cytomegalovirus humanbeta5</taxon>
        <taxon>Human cytomegalovirus</taxon>
    </lineage>
</organism>
<accession>P16785</accession>
<accession>Q7M6N7</accession>
<evidence type="ECO:0000255" key="1">
    <source>
        <dbReference type="HAMAP-Rule" id="MF_04044"/>
    </source>
</evidence>
<evidence type="ECO:0000256" key="2">
    <source>
        <dbReference type="SAM" id="MobiDB-lite"/>
    </source>
</evidence>
<evidence type="ECO:0007829" key="3">
    <source>
        <dbReference type="PDB" id="8TES"/>
    </source>
</evidence>
<reference key="1">
    <citation type="journal article" date="1990" name="Curr. Top. Microbiol. Immunol.">
        <title>Analysis of the protein-coding content of the sequence of human cytomegalovirus strain AD169.</title>
        <authorList>
            <person name="Chee M.S."/>
            <person name="Bankier A.T."/>
            <person name="Beck S."/>
            <person name="Bohni R."/>
            <person name="Brown C.M."/>
            <person name="Cerny R."/>
            <person name="Horsnell T."/>
            <person name="Hutchison C.A. III"/>
            <person name="Kouzarides T."/>
            <person name="Martignetti J.A."/>
            <person name="Preddie E."/>
            <person name="Satchwell S.C."/>
            <person name="Tomlinson P."/>
            <person name="Weston K.M."/>
            <person name="Barrell B.G."/>
        </authorList>
    </citation>
    <scope>NUCLEOTIDE SEQUENCE [LARGE SCALE GENOMIC DNA]</scope>
</reference>
<reference key="2">
    <citation type="journal article" date="2003" name="J. Gen. Virol.">
        <title>The human cytomegalovirus genome revisited: comparison with the chimpanzee cytomegalovirus genome.</title>
        <authorList>
            <person name="Davison A.J."/>
            <person name="Dolan A."/>
            <person name="Akter P."/>
            <person name="Addison C."/>
            <person name="Dargan D.J."/>
            <person name="Alcendor D.J."/>
            <person name="McGeoch D.J."/>
            <person name="Hayward G.S."/>
        </authorList>
    </citation>
    <scope>GENOME REANNOTATION</scope>
</reference>
<reference key="3">
    <citation type="journal article" date="2003" name="J. Gen. Virol.">
        <authorList>
            <person name="Davison A.J."/>
            <person name="Dolan A."/>
            <person name="Akter P."/>
            <person name="Addison C."/>
            <person name="Dargan D.J."/>
            <person name="Alcendor D.J."/>
            <person name="McGeoch D.J."/>
            <person name="Hayward G.S."/>
        </authorList>
    </citation>
    <scope>ERRATUM OF PUBMED:12533697</scope>
</reference>
<reference key="4">
    <citation type="journal article" date="2004" name="J. Virol.">
        <title>Identification of proteins in human cytomegalovirus (HCMV) particles: the HCMV proteome.</title>
        <authorList>
            <person name="Varnum S.M."/>
            <person name="Streblow D.N."/>
            <person name="Monroe M.E."/>
            <person name="Smith P."/>
            <person name="Auberry K.J."/>
            <person name="Pasa-Tolic L."/>
            <person name="Wang D."/>
            <person name="Camp D.G. II"/>
            <person name="Rodland K."/>
            <person name="Wiley S."/>
            <person name="Britt W."/>
            <person name="Shenk T."/>
            <person name="Smith R.D."/>
            <person name="Nelson J.A."/>
        </authorList>
    </citation>
    <scope>IDENTIFICATION</scope>
</reference>
<reference key="5">
    <citation type="journal article" date="2004" name="J. Virol.">
        <authorList>
            <person name="Varnum S.M."/>
            <person name="Streblow D.N."/>
            <person name="Monroe M.E."/>
            <person name="Smith P."/>
            <person name="Auberry K.J."/>
            <person name="Pasa-Tolic L."/>
            <person name="Wang D."/>
            <person name="Camp D.G. II"/>
            <person name="Rodland K."/>
            <person name="Wiley S."/>
            <person name="Britt W."/>
            <person name="Shenk T."/>
            <person name="Smith R.D."/>
            <person name="Nelson J.A."/>
        </authorList>
    </citation>
    <scope>ERRATUM OF PUBMED:15452216</scope>
</reference>
<organismHost>
    <name type="scientific">Homo sapiens</name>
    <name type="common">Human</name>
    <dbReference type="NCBI Taxonomy" id="9606"/>
</organismHost>
<feature type="chain" id="PRO_0000116043" description="Large tegument protein deneddylase">
    <location>
        <begin position="1"/>
        <end position="2241"/>
    </location>
</feature>
<feature type="domain" description="Peptidase C76" evidence="1">
    <location>
        <begin position="4"/>
        <end position="226"/>
    </location>
</feature>
<feature type="region of interest" description="Deubiquitination activity" evidence="1">
    <location>
        <begin position="1"/>
        <end position="238"/>
    </location>
</feature>
<feature type="region of interest" description="Disordered" evidence="2">
    <location>
        <begin position="239"/>
        <end position="314"/>
    </location>
</feature>
<feature type="region of interest" description="Interaction with inner tegument protein" evidence="1">
    <location>
        <begin position="327"/>
        <end position="331"/>
    </location>
</feature>
<feature type="region of interest" description="Disordered" evidence="2">
    <location>
        <begin position="1170"/>
        <end position="1229"/>
    </location>
</feature>
<feature type="compositionally biased region" description="Low complexity" evidence="2">
    <location>
        <begin position="240"/>
        <end position="250"/>
    </location>
</feature>
<feature type="compositionally biased region" description="Pro residues" evidence="2">
    <location>
        <begin position="251"/>
        <end position="268"/>
    </location>
</feature>
<feature type="compositionally biased region" description="Low complexity" evidence="2">
    <location>
        <begin position="304"/>
        <end position="314"/>
    </location>
</feature>
<feature type="compositionally biased region" description="Basic and acidic residues" evidence="2">
    <location>
        <begin position="1190"/>
        <end position="1199"/>
    </location>
</feature>
<feature type="active site" evidence="1">
    <location>
        <position position="24"/>
    </location>
</feature>
<feature type="active site" evidence="1">
    <location>
        <position position="160"/>
    </location>
</feature>
<feature type="active site" evidence="1">
    <location>
        <position position="162"/>
    </location>
</feature>
<feature type="helix" evidence="3">
    <location>
        <begin position="2204"/>
        <end position="2239"/>
    </location>
</feature>
<keyword id="KW-0002">3D-structure</keyword>
<keyword id="KW-1035">Host cytoplasm</keyword>
<keyword id="KW-1048">Host nucleus</keyword>
<keyword id="KW-0945">Host-virus interaction</keyword>
<keyword id="KW-0378">Hydrolase</keyword>
<keyword id="KW-1127">Modulation of host ubiquitin pathway by viral deubiquitinase</keyword>
<keyword id="KW-1130">Modulation of host ubiquitin pathway by virus</keyword>
<keyword id="KW-0645">Protease</keyword>
<keyword id="KW-1185">Reference proteome</keyword>
<keyword id="KW-0677">Repeat</keyword>
<keyword id="KW-0788">Thiol protease</keyword>
<keyword id="KW-0833">Ubl conjugation pathway</keyword>
<keyword id="KW-0946">Virion</keyword>
<keyword id="KW-0920">Virion tegument</keyword>